<proteinExistence type="evidence at protein level"/>
<accession>Q9CZX7</accession>
<feature type="chain" id="PRO_0000235229" description="Type 2 phosphatidylinositol 4,5-bisphosphate 4-phosphatase">
    <location>
        <begin position="1"/>
        <end position="257"/>
    </location>
</feature>
<feature type="transmembrane region" description="Helical" evidence="3">
    <location>
        <begin position="192"/>
        <end position="212"/>
    </location>
</feature>
<feature type="transmembrane region" description="Helical" evidence="3">
    <location>
        <begin position="227"/>
        <end position="247"/>
    </location>
</feature>
<feature type="region of interest" description="Disordered" evidence="4">
    <location>
        <begin position="1"/>
        <end position="43"/>
    </location>
</feature>
<feature type="short sequence motif" description="CX5R motif">
    <location>
        <begin position="107"/>
        <end position="113"/>
    </location>
</feature>
<feature type="compositionally biased region" description="Basic and acidic residues" evidence="4">
    <location>
        <begin position="1"/>
        <end position="10"/>
    </location>
</feature>
<feature type="compositionally biased region" description="Polar residues" evidence="4">
    <location>
        <begin position="13"/>
        <end position="23"/>
    </location>
</feature>
<feature type="active site" evidence="1">
    <location>
        <position position="107"/>
    </location>
</feature>
<feature type="modified residue" description="Phosphothreonine" evidence="6">
    <location>
        <position position="22"/>
    </location>
</feature>
<feature type="modified residue" description="Phosphoserine" evidence="6">
    <location>
        <position position="33"/>
    </location>
</feature>
<gene>
    <name type="primary">Pip4p2</name>
    <name type="synonym">Tmem55a</name>
</gene>
<comment type="function">
    <text evidence="2 5">Catalyzes the hydrolysis of phosphatidylinositol-4,5-bisphosphate (PtdIns-4,5-P2) to phosphatidylinositol-4-phosphate (PtdIns-4-P) (By similarity). Does not hydrolyze phosphatidylinositol 3,4,5-trisphosphate, phosphatidylinositol 3,4-bisphosphate, inositol 3,5-bisphosphate, inositol 3,4-bisphosphate, phosphatidylinositol 5-monophosphate, phosphatidylinositol 4-monophosphate and phosphatidylinositol 3-monophosphate (By similarity). Negatively regulates the phagocytosis of large particles by reducing phagosomal phosphatidylinositol 4,5-bisphosphate accumulation during cup formation (PubMed:29378918).</text>
</comment>
<comment type="catalytic activity">
    <reaction evidence="2">
        <text>a 1,2-diacyl-sn-glycero-3-phospho-(1D-myo-inositol-4,5-bisphosphate) + H2O = a 1,2-diacyl-sn-glycero-3-phospho-(1D-myo-inositol-5-phosphate) + phosphate</text>
        <dbReference type="Rhea" id="RHEA:25674"/>
        <dbReference type="ChEBI" id="CHEBI:15377"/>
        <dbReference type="ChEBI" id="CHEBI:43474"/>
        <dbReference type="ChEBI" id="CHEBI:57795"/>
        <dbReference type="ChEBI" id="CHEBI:58456"/>
        <dbReference type="EC" id="3.1.3.78"/>
    </reaction>
</comment>
<comment type="subcellular location">
    <subcellularLocation>
        <location evidence="5">Late endosome membrane</location>
        <topology evidence="3">Multi-pass membrane protein</topology>
    </subcellularLocation>
    <subcellularLocation>
        <location evidence="2">Lysosome membrane</location>
        <topology evidence="3">Multi-pass membrane protein</topology>
    </subcellularLocation>
    <subcellularLocation>
        <location evidence="5">Cell membrane</location>
        <topology evidence="3">Multi-pass membrane protein</topology>
    </subcellularLocation>
    <subcellularLocation>
        <location evidence="5">Cytoplasmic vesicle</location>
        <location evidence="5">Phagosome membrane</location>
        <topology evidence="3">Multi-pass membrane protein</topology>
    </subcellularLocation>
</comment>
<sequence length="257" mass="28038">MAADGVDERSPLLSASHSGNVTPTAPPYLQESSPRAELPPPYTAIASPGTSGIPVINCRVCQSLINLDGKLHQHVVKCTVCNEATPIKTPPTGKKYVRCPCNCLLICKDTSRRIGCPRPNCRRIINLGPVMLISEEQPAQPALPIQPEGTRVVCGHCGNTFLWMELRFNTLAKCPHCKKISSVGSALPRRRCCAYVTIGMICIFIAVGLTVGTQDFSRRFHATYVSWAIAYLLGLICLIRACYWGAIRVSYPEHGFA</sequence>
<protein>
    <recommendedName>
        <fullName>Type 2 phosphatidylinositol 4,5-bisphosphate 4-phosphatase</fullName>
        <shortName>Type 2 PtdIns-4,5-P2 4-Ptase</shortName>
        <ecNumber evidence="2">3.1.3.78</ecNumber>
    </recommendedName>
    <alternativeName>
        <fullName>PtdIns-4,5-P2 4-Ptase II</fullName>
    </alternativeName>
    <alternativeName>
        <fullName>Transmembrane protein 55A</fullName>
    </alternativeName>
</protein>
<dbReference type="EC" id="3.1.3.78" evidence="2"/>
<dbReference type="EMBL" id="AK012054">
    <property type="protein sequence ID" value="BAB27995.1"/>
    <property type="molecule type" value="mRNA"/>
</dbReference>
<dbReference type="EMBL" id="AK033845">
    <property type="protein sequence ID" value="BAC28493.1"/>
    <property type="molecule type" value="mRNA"/>
</dbReference>
<dbReference type="EMBL" id="AK049213">
    <property type="protein sequence ID" value="BAC33613.1"/>
    <property type="molecule type" value="mRNA"/>
</dbReference>
<dbReference type="EMBL" id="BC021435">
    <property type="protein sequence ID" value="AAH21435.1"/>
    <property type="molecule type" value="mRNA"/>
</dbReference>
<dbReference type="CCDS" id="CCDS17981.1"/>
<dbReference type="RefSeq" id="NP_082540.1">
    <property type="nucleotide sequence ID" value="NM_028264.5"/>
</dbReference>
<dbReference type="SMR" id="Q9CZX7"/>
<dbReference type="BioGRID" id="215414">
    <property type="interactions" value="6"/>
</dbReference>
<dbReference type="FunCoup" id="Q9CZX7">
    <property type="interactions" value="1708"/>
</dbReference>
<dbReference type="IntAct" id="Q9CZX7">
    <property type="interactions" value="5"/>
</dbReference>
<dbReference type="STRING" id="10090.ENSMUSP00000029875"/>
<dbReference type="GlyGen" id="Q9CZX7">
    <property type="glycosylation" value="2 sites"/>
</dbReference>
<dbReference type="iPTMnet" id="Q9CZX7"/>
<dbReference type="PhosphoSitePlus" id="Q9CZX7"/>
<dbReference type="SwissPalm" id="Q9CZX7"/>
<dbReference type="jPOST" id="Q9CZX7"/>
<dbReference type="PaxDb" id="10090-ENSMUSP00000029875"/>
<dbReference type="PeptideAtlas" id="Q9CZX7"/>
<dbReference type="ProteomicsDB" id="289872"/>
<dbReference type="Pumba" id="Q9CZX7"/>
<dbReference type="Antibodypedia" id="3026">
    <property type="antibodies" value="41 antibodies from 13 providers"/>
</dbReference>
<dbReference type="Ensembl" id="ENSMUST00000029875.4">
    <property type="protein sequence ID" value="ENSMUSP00000029875.4"/>
    <property type="gene ID" value="ENSMUSG00000028221.4"/>
</dbReference>
<dbReference type="GeneID" id="72519"/>
<dbReference type="KEGG" id="mmu:72519"/>
<dbReference type="UCSC" id="uc008sbg.1">
    <property type="organism name" value="mouse"/>
</dbReference>
<dbReference type="AGR" id="MGI:1919769"/>
<dbReference type="CTD" id="55529"/>
<dbReference type="MGI" id="MGI:1919769">
    <property type="gene designation" value="Pip4p2"/>
</dbReference>
<dbReference type="VEuPathDB" id="HostDB:ENSMUSG00000028221"/>
<dbReference type="eggNOG" id="KOG4684">
    <property type="taxonomic scope" value="Eukaryota"/>
</dbReference>
<dbReference type="GeneTree" id="ENSGT00390000003680"/>
<dbReference type="HOGENOM" id="CLU_087485_0_0_1"/>
<dbReference type="InParanoid" id="Q9CZX7"/>
<dbReference type="OMA" id="ATYISWA"/>
<dbReference type="OrthoDB" id="9939933at2759"/>
<dbReference type="PhylomeDB" id="Q9CZX7"/>
<dbReference type="TreeFam" id="TF316367"/>
<dbReference type="BioGRID-ORCS" id="72519">
    <property type="hits" value="2 hits in 81 CRISPR screens"/>
</dbReference>
<dbReference type="ChiTaRS" id="Pip4p2">
    <property type="organism name" value="mouse"/>
</dbReference>
<dbReference type="PRO" id="PR:Q9CZX7"/>
<dbReference type="Proteomes" id="UP000000589">
    <property type="component" value="Chromosome 4"/>
</dbReference>
<dbReference type="RNAct" id="Q9CZX7">
    <property type="molecule type" value="protein"/>
</dbReference>
<dbReference type="Bgee" id="ENSMUSG00000028221">
    <property type="expression patterns" value="Expressed in frontonasal prominence and 259 other cell types or tissues"/>
</dbReference>
<dbReference type="GO" id="GO:0031902">
    <property type="term" value="C:late endosome membrane"/>
    <property type="evidence" value="ECO:0000314"/>
    <property type="project" value="UniProtKB"/>
</dbReference>
<dbReference type="GO" id="GO:0005765">
    <property type="term" value="C:lysosomal membrane"/>
    <property type="evidence" value="ECO:0007669"/>
    <property type="project" value="UniProtKB-SubCell"/>
</dbReference>
<dbReference type="GO" id="GO:0030670">
    <property type="term" value="C:phagocytic vesicle membrane"/>
    <property type="evidence" value="ECO:0000314"/>
    <property type="project" value="UniProtKB"/>
</dbReference>
<dbReference type="GO" id="GO:0005886">
    <property type="term" value="C:plasma membrane"/>
    <property type="evidence" value="ECO:0000314"/>
    <property type="project" value="UniProtKB"/>
</dbReference>
<dbReference type="GO" id="GO:0034597">
    <property type="term" value="F:phosphatidylinositol-4,5-bisphosphate 4-phosphatase activity"/>
    <property type="evidence" value="ECO:0007669"/>
    <property type="project" value="UniProtKB-EC"/>
</dbReference>
<dbReference type="GO" id="GO:0050765">
    <property type="term" value="P:negative regulation of phagocytosis"/>
    <property type="evidence" value="ECO:0000315"/>
    <property type="project" value="UniProtKB"/>
</dbReference>
<dbReference type="GO" id="GO:0046856">
    <property type="term" value="P:phosphatidylinositol dephosphorylation"/>
    <property type="evidence" value="ECO:0000315"/>
    <property type="project" value="UniProtKB"/>
</dbReference>
<dbReference type="InterPro" id="IPR019178">
    <property type="entry name" value="PtdIns-P2-Ptase"/>
</dbReference>
<dbReference type="PANTHER" id="PTHR21014">
    <property type="entry name" value="PHOSPHATIDYLINOSITOL-4,5-BISPHOSPHATE 4-PHOSPHATASE"/>
    <property type="match status" value="1"/>
</dbReference>
<dbReference type="PANTHER" id="PTHR21014:SF5">
    <property type="entry name" value="TYPE 2 PHOSPHATIDYLINOSITOL 4,5-BISPHOSPHATE 4-PHOSPHATASE"/>
    <property type="match status" value="1"/>
</dbReference>
<dbReference type="Pfam" id="PF09788">
    <property type="entry name" value="Tmemb_55A"/>
    <property type="match status" value="1"/>
</dbReference>
<reference key="1">
    <citation type="journal article" date="2005" name="Science">
        <title>The transcriptional landscape of the mammalian genome.</title>
        <authorList>
            <person name="Carninci P."/>
            <person name="Kasukawa T."/>
            <person name="Katayama S."/>
            <person name="Gough J."/>
            <person name="Frith M.C."/>
            <person name="Maeda N."/>
            <person name="Oyama R."/>
            <person name="Ravasi T."/>
            <person name="Lenhard B."/>
            <person name="Wells C."/>
            <person name="Kodzius R."/>
            <person name="Shimokawa K."/>
            <person name="Bajic V.B."/>
            <person name="Brenner S.E."/>
            <person name="Batalov S."/>
            <person name="Forrest A.R."/>
            <person name="Zavolan M."/>
            <person name="Davis M.J."/>
            <person name="Wilming L.G."/>
            <person name="Aidinis V."/>
            <person name="Allen J.E."/>
            <person name="Ambesi-Impiombato A."/>
            <person name="Apweiler R."/>
            <person name="Aturaliya R.N."/>
            <person name="Bailey T.L."/>
            <person name="Bansal M."/>
            <person name="Baxter L."/>
            <person name="Beisel K.W."/>
            <person name="Bersano T."/>
            <person name="Bono H."/>
            <person name="Chalk A.M."/>
            <person name="Chiu K.P."/>
            <person name="Choudhary V."/>
            <person name="Christoffels A."/>
            <person name="Clutterbuck D.R."/>
            <person name="Crowe M.L."/>
            <person name="Dalla E."/>
            <person name="Dalrymple B.P."/>
            <person name="de Bono B."/>
            <person name="Della Gatta G."/>
            <person name="di Bernardo D."/>
            <person name="Down T."/>
            <person name="Engstrom P."/>
            <person name="Fagiolini M."/>
            <person name="Faulkner G."/>
            <person name="Fletcher C.F."/>
            <person name="Fukushima T."/>
            <person name="Furuno M."/>
            <person name="Futaki S."/>
            <person name="Gariboldi M."/>
            <person name="Georgii-Hemming P."/>
            <person name="Gingeras T.R."/>
            <person name="Gojobori T."/>
            <person name="Green R.E."/>
            <person name="Gustincich S."/>
            <person name="Harbers M."/>
            <person name="Hayashi Y."/>
            <person name="Hensch T.K."/>
            <person name="Hirokawa N."/>
            <person name="Hill D."/>
            <person name="Huminiecki L."/>
            <person name="Iacono M."/>
            <person name="Ikeo K."/>
            <person name="Iwama A."/>
            <person name="Ishikawa T."/>
            <person name="Jakt M."/>
            <person name="Kanapin A."/>
            <person name="Katoh M."/>
            <person name="Kawasawa Y."/>
            <person name="Kelso J."/>
            <person name="Kitamura H."/>
            <person name="Kitano H."/>
            <person name="Kollias G."/>
            <person name="Krishnan S.P."/>
            <person name="Kruger A."/>
            <person name="Kummerfeld S.K."/>
            <person name="Kurochkin I.V."/>
            <person name="Lareau L.F."/>
            <person name="Lazarevic D."/>
            <person name="Lipovich L."/>
            <person name="Liu J."/>
            <person name="Liuni S."/>
            <person name="McWilliam S."/>
            <person name="Madan Babu M."/>
            <person name="Madera M."/>
            <person name="Marchionni L."/>
            <person name="Matsuda H."/>
            <person name="Matsuzawa S."/>
            <person name="Miki H."/>
            <person name="Mignone F."/>
            <person name="Miyake S."/>
            <person name="Morris K."/>
            <person name="Mottagui-Tabar S."/>
            <person name="Mulder N."/>
            <person name="Nakano N."/>
            <person name="Nakauchi H."/>
            <person name="Ng P."/>
            <person name="Nilsson R."/>
            <person name="Nishiguchi S."/>
            <person name="Nishikawa S."/>
            <person name="Nori F."/>
            <person name="Ohara O."/>
            <person name="Okazaki Y."/>
            <person name="Orlando V."/>
            <person name="Pang K.C."/>
            <person name="Pavan W.J."/>
            <person name="Pavesi G."/>
            <person name="Pesole G."/>
            <person name="Petrovsky N."/>
            <person name="Piazza S."/>
            <person name="Reed J."/>
            <person name="Reid J.F."/>
            <person name="Ring B.Z."/>
            <person name="Ringwald M."/>
            <person name="Rost B."/>
            <person name="Ruan Y."/>
            <person name="Salzberg S.L."/>
            <person name="Sandelin A."/>
            <person name="Schneider C."/>
            <person name="Schoenbach C."/>
            <person name="Sekiguchi K."/>
            <person name="Semple C.A."/>
            <person name="Seno S."/>
            <person name="Sessa L."/>
            <person name="Sheng Y."/>
            <person name="Shibata Y."/>
            <person name="Shimada H."/>
            <person name="Shimada K."/>
            <person name="Silva D."/>
            <person name="Sinclair B."/>
            <person name="Sperling S."/>
            <person name="Stupka E."/>
            <person name="Sugiura K."/>
            <person name="Sultana R."/>
            <person name="Takenaka Y."/>
            <person name="Taki K."/>
            <person name="Tammoja K."/>
            <person name="Tan S.L."/>
            <person name="Tang S."/>
            <person name="Taylor M.S."/>
            <person name="Tegner J."/>
            <person name="Teichmann S.A."/>
            <person name="Ueda H.R."/>
            <person name="van Nimwegen E."/>
            <person name="Verardo R."/>
            <person name="Wei C.L."/>
            <person name="Yagi K."/>
            <person name="Yamanishi H."/>
            <person name="Zabarovsky E."/>
            <person name="Zhu S."/>
            <person name="Zimmer A."/>
            <person name="Hide W."/>
            <person name="Bult C."/>
            <person name="Grimmond S.M."/>
            <person name="Teasdale R.D."/>
            <person name="Liu E.T."/>
            <person name="Brusic V."/>
            <person name="Quackenbush J."/>
            <person name="Wahlestedt C."/>
            <person name="Mattick J.S."/>
            <person name="Hume D.A."/>
            <person name="Kai C."/>
            <person name="Sasaki D."/>
            <person name="Tomaru Y."/>
            <person name="Fukuda S."/>
            <person name="Kanamori-Katayama M."/>
            <person name="Suzuki M."/>
            <person name="Aoki J."/>
            <person name="Arakawa T."/>
            <person name="Iida J."/>
            <person name="Imamura K."/>
            <person name="Itoh M."/>
            <person name="Kato T."/>
            <person name="Kawaji H."/>
            <person name="Kawagashira N."/>
            <person name="Kawashima T."/>
            <person name="Kojima M."/>
            <person name="Kondo S."/>
            <person name="Konno H."/>
            <person name="Nakano K."/>
            <person name="Ninomiya N."/>
            <person name="Nishio T."/>
            <person name="Okada M."/>
            <person name="Plessy C."/>
            <person name="Shibata K."/>
            <person name="Shiraki T."/>
            <person name="Suzuki S."/>
            <person name="Tagami M."/>
            <person name="Waki K."/>
            <person name="Watahiki A."/>
            <person name="Okamura-Oho Y."/>
            <person name="Suzuki H."/>
            <person name="Kawai J."/>
            <person name="Hayashizaki Y."/>
        </authorList>
    </citation>
    <scope>NUCLEOTIDE SEQUENCE [LARGE SCALE MRNA]</scope>
    <source>
        <strain>C57BL/6J</strain>
        <tissue>Epididymis</tissue>
    </source>
</reference>
<reference key="2">
    <citation type="journal article" date="2004" name="Genome Res.">
        <title>The status, quality, and expansion of the NIH full-length cDNA project: the Mammalian Gene Collection (MGC).</title>
        <authorList>
            <consortium name="The MGC Project Team"/>
        </authorList>
    </citation>
    <scope>NUCLEOTIDE SEQUENCE [LARGE SCALE MRNA]</scope>
    <source>
        <strain>FVB/N</strain>
        <tissue>Mammary tumor</tissue>
    </source>
</reference>
<reference key="3">
    <citation type="journal article" date="2007" name="Proc. Natl. Acad. Sci. U.S.A.">
        <title>Large-scale phosphorylation analysis of mouse liver.</title>
        <authorList>
            <person name="Villen J."/>
            <person name="Beausoleil S.A."/>
            <person name="Gerber S.A."/>
            <person name="Gygi S.P."/>
        </authorList>
    </citation>
    <scope>IDENTIFICATION BY MASS SPECTROMETRY [LARGE SCALE ANALYSIS]</scope>
    <source>
        <tissue>Liver</tissue>
    </source>
</reference>
<reference key="4">
    <citation type="journal article" date="2009" name="Immunity">
        <title>The phagosomal proteome in interferon-gamma-activated macrophages.</title>
        <authorList>
            <person name="Trost M."/>
            <person name="English L."/>
            <person name="Lemieux S."/>
            <person name="Courcelles M."/>
            <person name="Desjardins M."/>
            <person name="Thibault P."/>
        </authorList>
    </citation>
    <scope>IDENTIFICATION BY MASS SPECTROMETRY [LARGE SCALE ANALYSIS]</scope>
</reference>
<reference key="5">
    <citation type="journal article" date="2010" name="Cell">
        <title>A tissue-specific atlas of mouse protein phosphorylation and expression.</title>
        <authorList>
            <person name="Huttlin E.L."/>
            <person name="Jedrychowski M.P."/>
            <person name="Elias J.E."/>
            <person name="Goswami T."/>
            <person name="Rad R."/>
            <person name="Beausoleil S.A."/>
            <person name="Villen J."/>
            <person name="Haas W."/>
            <person name="Sowa M.E."/>
            <person name="Gygi S.P."/>
        </authorList>
    </citation>
    <scope>PHOSPHORYLATION [LARGE SCALE ANALYSIS] AT THR-22 AND SER-33</scope>
    <scope>IDENTIFICATION BY MASS SPECTROMETRY [LARGE SCALE ANALYSIS]</scope>
    <source>
        <tissue>Brain</tissue>
        <tissue>Brown adipose tissue</tissue>
        <tissue>Heart</tissue>
        <tissue>Kidney</tissue>
        <tissue>Liver</tissue>
        <tissue>Lung</tissue>
        <tissue>Pancreas</tissue>
        <tissue>Spleen</tissue>
        <tissue>Testis</tissue>
    </source>
</reference>
<reference key="6">
    <citation type="journal article" date="2018" name="J. Cell Sci.">
        <title>TMEM55a localizes to macrophage phagosomes to downregulate phagocytosis.</title>
        <authorList>
            <person name="Morioka S."/>
            <person name="Nigorikawa K."/>
            <person name="Okada E."/>
            <person name="Tanaka Y."/>
            <person name="Kasuu Y."/>
            <person name="Yamada M."/>
            <person name="Kofuji S."/>
            <person name="Takasuga S."/>
            <person name="Nakanishi H."/>
            <person name="Sasaki T."/>
            <person name="Hazeki K."/>
        </authorList>
    </citation>
    <scope>FUNCTION</scope>
    <scope>SUBCELLULAR LOCATION</scope>
</reference>
<keyword id="KW-1003">Cell membrane</keyword>
<keyword id="KW-0968">Cytoplasmic vesicle</keyword>
<keyword id="KW-0967">Endosome</keyword>
<keyword id="KW-0378">Hydrolase</keyword>
<keyword id="KW-0443">Lipid metabolism</keyword>
<keyword id="KW-0458">Lysosome</keyword>
<keyword id="KW-0472">Membrane</keyword>
<keyword id="KW-0597">Phosphoprotein</keyword>
<keyword id="KW-1185">Reference proteome</keyword>
<keyword id="KW-0812">Transmembrane</keyword>
<keyword id="KW-1133">Transmembrane helix</keyword>
<organism>
    <name type="scientific">Mus musculus</name>
    <name type="common">Mouse</name>
    <dbReference type="NCBI Taxonomy" id="10090"/>
    <lineage>
        <taxon>Eukaryota</taxon>
        <taxon>Metazoa</taxon>
        <taxon>Chordata</taxon>
        <taxon>Craniata</taxon>
        <taxon>Vertebrata</taxon>
        <taxon>Euteleostomi</taxon>
        <taxon>Mammalia</taxon>
        <taxon>Eutheria</taxon>
        <taxon>Euarchontoglires</taxon>
        <taxon>Glires</taxon>
        <taxon>Rodentia</taxon>
        <taxon>Myomorpha</taxon>
        <taxon>Muroidea</taxon>
        <taxon>Muridae</taxon>
        <taxon>Murinae</taxon>
        <taxon>Mus</taxon>
        <taxon>Mus</taxon>
    </lineage>
</organism>
<evidence type="ECO:0000250" key="1"/>
<evidence type="ECO:0000250" key="2">
    <source>
        <dbReference type="UniProtKB" id="Q8N4L2"/>
    </source>
</evidence>
<evidence type="ECO:0000255" key="3"/>
<evidence type="ECO:0000256" key="4">
    <source>
        <dbReference type="SAM" id="MobiDB-lite"/>
    </source>
</evidence>
<evidence type="ECO:0000269" key="5">
    <source>
    </source>
</evidence>
<evidence type="ECO:0007744" key="6">
    <source>
    </source>
</evidence>
<name>PP4P2_MOUSE</name>